<keyword id="KW-0175">Coiled coil</keyword>
<keyword id="KW-0963">Cytoplasm</keyword>
<keyword id="KW-0206">Cytoskeleton</keyword>
<keyword id="KW-0967">Endosome</keyword>
<keyword id="KW-0333">Golgi apparatus</keyword>
<keyword id="KW-0472">Membrane</keyword>
<keyword id="KW-0597">Phosphoprotein</keyword>
<keyword id="KW-0653">Protein transport</keyword>
<keyword id="KW-1185">Reference proteome</keyword>
<keyword id="KW-0813">Transport</keyword>
<dbReference type="EMBL" id="Z29988">
    <property type="protein sequence ID" value="CAA82878.1"/>
    <property type="molecule type" value="Genomic_DNA"/>
</dbReference>
<dbReference type="EMBL" id="U33050">
    <property type="protein sequence ID" value="AAB64912.1"/>
    <property type="molecule type" value="Genomic_DNA"/>
</dbReference>
<dbReference type="EMBL" id="BK006938">
    <property type="protein sequence ID" value="DAA12317.1"/>
    <property type="molecule type" value="Genomic_DNA"/>
</dbReference>
<dbReference type="PIR" id="S69651">
    <property type="entry name" value="S69651"/>
</dbReference>
<dbReference type="RefSeq" id="NP_010772.1">
    <property type="nucleotide sequence ID" value="NM_001180792.1"/>
</dbReference>
<dbReference type="SMR" id="P39904"/>
<dbReference type="BioGRID" id="32536">
    <property type="interactions" value="431"/>
</dbReference>
<dbReference type="ComplexPortal" id="CPX-1718">
    <property type="entry name" value="GARP tethering complex"/>
</dbReference>
<dbReference type="DIP" id="DIP-3967N"/>
<dbReference type="FunCoup" id="P39904">
    <property type="interactions" value="1003"/>
</dbReference>
<dbReference type="IntAct" id="P39904">
    <property type="interactions" value="11"/>
</dbReference>
<dbReference type="MINT" id="P39904"/>
<dbReference type="STRING" id="4932.YDR484W"/>
<dbReference type="iPTMnet" id="P39904"/>
<dbReference type="PaxDb" id="4932-YDR484W"/>
<dbReference type="PeptideAtlas" id="P39904"/>
<dbReference type="EnsemblFungi" id="YDR484W_mRNA">
    <property type="protein sequence ID" value="YDR484W"/>
    <property type="gene ID" value="YDR484W"/>
</dbReference>
<dbReference type="GeneID" id="852095"/>
<dbReference type="KEGG" id="sce:YDR484W"/>
<dbReference type="AGR" id="SGD:S000002892"/>
<dbReference type="SGD" id="S000002892">
    <property type="gene designation" value="VPS52"/>
</dbReference>
<dbReference type="VEuPathDB" id="FungiDB:YDR484W"/>
<dbReference type="eggNOG" id="KOG1961">
    <property type="taxonomic scope" value="Eukaryota"/>
</dbReference>
<dbReference type="GeneTree" id="ENSGT00390000008815"/>
<dbReference type="HOGENOM" id="CLU_010797_1_0_1"/>
<dbReference type="InParanoid" id="P39904"/>
<dbReference type="OMA" id="VFRLECE"/>
<dbReference type="OrthoDB" id="19482at2759"/>
<dbReference type="BioCyc" id="YEAST:G3O-30009-MONOMER"/>
<dbReference type="BioGRID-ORCS" id="852095">
    <property type="hits" value="1 hit in 10 CRISPR screens"/>
</dbReference>
<dbReference type="PRO" id="PR:P39904"/>
<dbReference type="Proteomes" id="UP000002311">
    <property type="component" value="Chromosome IV"/>
</dbReference>
<dbReference type="RNAct" id="P39904">
    <property type="molecule type" value="protein"/>
</dbReference>
<dbReference type="GO" id="GO:0005856">
    <property type="term" value="C:cytoskeleton"/>
    <property type="evidence" value="ECO:0007669"/>
    <property type="project" value="UniProtKB-SubCell"/>
</dbReference>
<dbReference type="GO" id="GO:0005829">
    <property type="term" value="C:cytosol"/>
    <property type="evidence" value="ECO:0007005"/>
    <property type="project" value="SGD"/>
</dbReference>
<dbReference type="GO" id="GO:0010008">
    <property type="term" value="C:endosome membrane"/>
    <property type="evidence" value="ECO:0007669"/>
    <property type="project" value="UniProtKB-SubCell"/>
</dbReference>
<dbReference type="GO" id="GO:0000938">
    <property type="term" value="C:GARP complex"/>
    <property type="evidence" value="ECO:0000353"/>
    <property type="project" value="SGD"/>
</dbReference>
<dbReference type="GO" id="GO:0005794">
    <property type="term" value="C:Golgi apparatus"/>
    <property type="evidence" value="ECO:0000314"/>
    <property type="project" value="SGD"/>
</dbReference>
<dbReference type="GO" id="GO:0019905">
    <property type="term" value="F:syntaxin binding"/>
    <property type="evidence" value="ECO:0000318"/>
    <property type="project" value="GO_Central"/>
</dbReference>
<dbReference type="GO" id="GO:0030029">
    <property type="term" value="P:actin filament-based process"/>
    <property type="evidence" value="ECO:0000315"/>
    <property type="project" value="SGD"/>
</dbReference>
<dbReference type="GO" id="GO:0032456">
    <property type="term" value="P:endocytic recycling"/>
    <property type="evidence" value="ECO:0000318"/>
    <property type="project" value="GO_Central"/>
</dbReference>
<dbReference type="GO" id="GO:0006896">
    <property type="term" value="P:Golgi to vacuole transport"/>
    <property type="evidence" value="ECO:0000315"/>
    <property type="project" value="SGD"/>
</dbReference>
<dbReference type="GO" id="GO:0090156">
    <property type="term" value="P:intracellular sphingolipid homeostasis"/>
    <property type="evidence" value="ECO:0000315"/>
    <property type="project" value="SGD"/>
</dbReference>
<dbReference type="GO" id="GO:0016239">
    <property type="term" value="P:positive regulation of macroautophagy"/>
    <property type="evidence" value="ECO:0000315"/>
    <property type="project" value="SGD"/>
</dbReference>
<dbReference type="GO" id="GO:0006623">
    <property type="term" value="P:protein targeting to vacuole"/>
    <property type="evidence" value="ECO:0000314"/>
    <property type="project" value="ComplexPortal"/>
</dbReference>
<dbReference type="GO" id="GO:0042147">
    <property type="term" value="P:retrograde transport, endosome to Golgi"/>
    <property type="evidence" value="ECO:0000314"/>
    <property type="project" value="SGD"/>
</dbReference>
<dbReference type="InterPro" id="IPR007258">
    <property type="entry name" value="Vps52"/>
</dbReference>
<dbReference type="InterPro" id="IPR048361">
    <property type="entry name" value="Vps52_C"/>
</dbReference>
<dbReference type="InterPro" id="IPR048319">
    <property type="entry name" value="Vps52_CC"/>
</dbReference>
<dbReference type="PANTHER" id="PTHR14190">
    <property type="entry name" value="SUPPRESSOR OF ACTIN MUTATIONS 2/VACUOLAR PROTEIN SORTING 52"/>
    <property type="match status" value="1"/>
</dbReference>
<dbReference type="PANTHER" id="PTHR14190:SF7">
    <property type="entry name" value="VACUOLAR PROTEIN SORTING-ASSOCIATED PROTEIN 52 HOMOLOG"/>
    <property type="match status" value="1"/>
</dbReference>
<dbReference type="Pfam" id="PF20655">
    <property type="entry name" value="Vps52_C"/>
    <property type="match status" value="1"/>
</dbReference>
<dbReference type="Pfam" id="PF04129">
    <property type="entry name" value="Vps52_CC"/>
    <property type="match status" value="1"/>
</dbReference>
<protein>
    <recommendedName>
        <fullName>Vacuolar protein sorting-associated protein 52</fullName>
    </recommendedName>
    <alternativeName>
        <fullName>Suppressor of actin mutation protein 2</fullName>
    </alternativeName>
</protein>
<accession>P39904</accession>
<accession>D6VTA7</accession>
<accession>Q03379</accession>
<evidence type="ECO:0000255" key="1"/>
<evidence type="ECO:0000269" key="2">
    <source>
    </source>
</evidence>
<evidence type="ECO:0000269" key="3">
    <source>
    </source>
</evidence>
<evidence type="ECO:0000269" key="4">
    <source>
    </source>
</evidence>
<evidence type="ECO:0000269" key="5">
    <source>
    </source>
</evidence>
<evidence type="ECO:0000269" key="6">
    <source>
    </source>
</evidence>
<evidence type="ECO:0000269" key="7">
    <source>
    </source>
</evidence>
<evidence type="ECO:0000269" key="8">
    <source>
    </source>
</evidence>
<evidence type="ECO:0000305" key="9"/>
<evidence type="ECO:0007744" key="10">
    <source>
    </source>
</evidence>
<proteinExistence type="evidence at protein level"/>
<comment type="function">
    <text evidence="2 3 4 5 6 8">Involved in retrograde transport from early and late endosomes to late Golgi by linking the vesicle through the t-SNARE TGL1 to the Golgi, leading to the membrane fusion between late Golgi and endosomal vesicles. May also be involved in the actin cytoskeleton organization.</text>
</comment>
<comment type="subunit">
    <text evidence="2 3 4 5 6">Component of the Golgi-associated retrograde protein (GARP) complex, also called VFT (VPS fifty-three) complex, composed of VPS51, VPS52, VPS53 and VPS54. Also interacts with TLG1 and YPT6.</text>
</comment>
<comment type="interaction">
    <interactant intactId="EBI-16418">
        <id>P39904</id>
    </interactant>
    <interactant intactId="EBI-26352">
        <id>P36116</id>
        <label>VPS51</label>
    </interactant>
    <organismsDiffer>false</organismsDiffer>
    <experiments>6</experiments>
</comment>
<comment type="interaction">
    <interactant intactId="EBI-16418">
        <id>P39904</id>
    </interactant>
    <interactant intactId="EBI-25828">
        <id>P47061</id>
        <label>VPS53</label>
    </interactant>
    <organismsDiffer>false</organismsDiffer>
    <experiments>8</experiments>
</comment>
<comment type="interaction">
    <interactant intactId="EBI-16418">
        <id>P39904</id>
    </interactant>
    <interactant intactId="EBI-36751">
        <id>Q12071</id>
        <label>VPS54</label>
    </interactant>
    <organismsDiffer>false</organismsDiffer>
    <experiments>9</experiments>
</comment>
<comment type="subcellular location">
    <subcellularLocation>
        <location>Golgi apparatus</location>
        <location>trans-Golgi network membrane</location>
        <topology>Peripheral membrane protein</topology>
    </subcellularLocation>
    <subcellularLocation>
        <location>Endosome membrane</location>
        <topology>Peripheral membrane protein</topology>
    </subcellularLocation>
    <subcellularLocation>
        <location>Cytoplasm</location>
        <location>Cytoskeleton</location>
    </subcellularLocation>
</comment>
<comment type="miscellaneous">
    <text evidence="7">Present with 3130 molecules/cell in log phase SD medium.</text>
</comment>
<comment type="similarity">
    <text evidence="9">Belongs to the VPS52 family.</text>
</comment>
<reference key="1">
    <citation type="journal article" date="1994" name="Yeast">
        <title>Nucleotide sequence of the SAC2 gene of Saccharomyces cerevisiae.</title>
        <authorList>
            <person name="Koelling R."/>
            <person name="Lee A."/>
            <person name="Chen E.Y."/>
            <person name="Botstein D."/>
        </authorList>
    </citation>
    <scope>NUCLEOTIDE SEQUENCE [GENOMIC DNA]</scope>
    <source>
        <strain>ATCC 204508 / S288c</strain>
    </source>
</reference>
<reference key="2">
    <citation type="journal article" date="1997" name="Nature">
        <title>The nucleotide sequence of Saccharomyces cerevisiae chromosome IV.</title>
        <authorList>
            <person name="Jacq C."/>
            <person name="Alt-Moerbe J."/>
            <person name="Andre B."/>
            <person name="Arnold W."/>
            <person name="Bahr A."/>
            <person name="Ballesta J.P.G."/>
            <person name="Bargues M."/>
            <person name="Baron L."/>
            <person name="Becker A."/>
            <person name="Biteau N."/>
            <person name="Bloecker H."/>
            <person name="Blugeon C."/>
            <person name="Boskovic J."/>
            <person name="Brandt P."/>
            <person name="Brueckner M."/>
            <person name="Buitrago M.J."/>
            <person name="Coster F."/>
            <person name="Delaveau T."/>
            <person name="del Rey F."/>
            <person name="Dujon B."/>
            <person name="Eide L.G."/>
            <person name="Garcia-Cantalejo J.M."/>
            <person name="Goffeau A."/>
            <person name="Gomez-Peris A."/>
            <person name="Granotier C."/>
            <person name="Hanemann V."/>
            <person name="Hankeln T."/>
            <person name="Hoheisel J.D."/>
            <person name="Jaeger W."/>
            <person name="Jimenez A."/>
            <person name="Jonniaux J.-L."/>
            <person name="Kraemer C."/>
            <person name="Kuester H."/>
            <person name="Laamanen P."/>
            <person name="Legros Y."/>
            <person name="Louis E.J."/>
            <person name="Moeller-Rieker S."/>
            <person name="Monnet A."/>
            <person name="Moro M."/>
            <person name="Mueller-Auer S."/>
            <person name="Nussbaumer B."/>
            <person name="Paricio N."/>
            <person name="Paulin L."/>
            <person name="Perea J."/>
            <person name="Perez-Alonso M."/>
            <person name="Perez-Ortin J.E."/>
            <person name="Pohl T.M."/>
            <person name="Prydz H."/>
            <person name="Purnelle B."/>
            <person name="Rasmussen S.W."/>
            <person name="Remacha M.A."/>
            <person name="Revuelta J.L."/>
            <person name="Rieger M."/>
            <person name="Salom D."/>
            <person name="Saluz H.P."/>
            <person name="Saiz J.E."/>
            <person name="Saren A.-M."/>
            <person name="Schaefer M."/>
            <person name="Scharfe M."/>
            <person name="Schmidt E.R."/>
            <person name="Schneider C."/>
            <person name="Scholler P."/>
            <person name="Schwarz S."/>
            <person name="Soler-Mira A."/>
            <person name="Urrestarazu L.A."/>
            <person name="Verhasselt P."/>
            <person name="Vissers S."/>
            <person name="Voet M."/>
            <person name="Volckaert G."/>
            <person name="Wagner G."/>
            <person name="Wambutt R."/>
            <person name="Wedler E."/>
            <person name="Wedler H."/>
            <person name="Woelfl S."/>
            <person name="Harris D.E."/>
            <person name="Bowman S."/>
            <person name="Brown D."/>
            <person name="Churcher C.M."/>
            <person name="Connor R."/>
            <person name="Dedman K."/>
            <person name="Gentles S."/>
            <person name="Hamlin N."/>
            <person name="Hunt S."/>
            <person name="Jones L."/>
            <person name="McDonald S."/>
            <person name="Murphy L.D."/>
            <person name="Niblett D."/>
            <person name="Odell C."/>
            <person name="Oliver K."/>
            <person name="Rajandream M.A."/>
            <person name="Richards C."/>
            <person name="Shore L."/>
            <person name="Walsh S.V."/>
            <person name="Barrell B.G."/>
            <person name="Dietrich F.S."/>
            <person name="Mulligan J.T."/>
            <person name="Allen E."/>
            <person name="Araujo R."/>
            <person name="Aviles E."/>
            <person name="Berno A."/>
            <person name="Carpenter J."/>
            <person name="Chen E."/>
            <person name="Cherry J.M."/>
            <person name="Chung E."/>
            <person name="Duncan M."/>
            <person name="Hunicke-Smith S."/>
            <person name="Hyman R.W."/>
            <person name="Komp C."/>
            <person name="Lashkari D."/>
            <person name="Lew H."/>
            <person name="Lin D."/>
            <person name="Mosedale D."/>
            <person name="Nakahara K."/>
            <person name="Namath A."/>
            <person name="Oefner P."/>
            <person name="Oh C."/>
            <person name="Petel F.X."/>
            <person name="Roberts D."/>
            <person name="Schramm S."/>
            <person name="Schroeder M."/>
            <person name="Shogren T."/>
            <person name="Shroff N."/>
            <person name="Winant A."/>
            <person name="Yelton M.A."/>
            <person name="Botstein D."/>
            <person name="Davis R.W."/>
            <person name="Johnston M."/>
            <person name="Andrews S."/>
            <person name="Brinkman R."/>
            <person name="Cooper J."/>
            <person name="Ding H."/>
            <person name="Du Z."/>
            <person name="Favello A."/>
            <person name="Fulton L."/>
            <person name="Gattung S."/>
            <person name="Greco T."/>
            <person name="Hallsworth K."/>
            <person name="Hawkins J."/>
            <person name="Hillier L.W."/>
            <person name="Jier M."/>
            <person name="Johnson D."/>
            <person name="Johnston L."/>
            <person name="Kirsten J."/>
            <person name="Kucaba T."/>
            <person name="Langston Y."/>
            <person name="Latreille P."/>
            <person name="Le T."/>
            <person name="Mardis E."/>
            <person name="Menezes S."/>
            <person name="Miller N."/>
            <person name="Nhan M."/>
            <person name="Pauley A."/>
            <person name="Peluso D."/>
            <person name="Rifkin L."/>
            <person name="Riles L."/>
            <person name="Taich A."/>
            <person name="Trevaskis E."/>
            <person name="Vignati D."/>
            <person name="Wilcox L."/>
            <person name="Wohldman P."/>
            <person name="Vaudin M."/>
            <person name="Wilson R."/>
            <person name="Waterston R."/>
            <person name="Albermann K."/>
            <person name="Hani J."/>
            <person name="Heumann K."/>
            <person name="Kleine K."/>
            <person name="Mewes H.-W."/>
            <person name="Zollner A."/>
            <person name="Zaccaria P."/>
        </authorList>
    </citation>
    <scope>NUCLEOTIDE SEQUENCE [LARGE SCALE GENOMIC DNA]</scope>
    <source>
        <strain>ATCC 204508 / S288c</strain>
    </source>
</reference>
<reference key="3">
    <citation type="journal article" date="2014" name="G3 (Bethesda)">
        <title>The reference genome sequence of Saccharomyces cerevisiae: Then and now.</title>
        <authorList>
            <person name="Engel S.R."/>
            <person name="Dietrich F.S."/>
            <person name="Fisk D.G."/>
            <person name="Binkley G."/>
            <person name="Balakrishnan R."/>
            <person name="Costanzo M.C."/>
            <person name="Dwight S.S."/>
            <person name="Hitz B.C."/>
            <person name="Karra K."/>
            <person name="Nash R.S."/>
            <person name="Weng S."/>
            <person name="Wong E.D."/>
            <person name="Lloyd P."/>
            <person name="Skrzypek M.S."/>
            <person name="Miyasato S.R."/>
            <person name="Simison M."/>
            <person name="Cherry J.M."/>
        </authorList>
    </citation>
    <scope>GENOME REANNOTATION</scope>
    <source>
        <strain>ATCC 204508 / S288c</strain>
    </source>
</reference>
<reference key="4">
    <citation type="journal article" date="1989" name="Genetics">
        <title>Suppressors of yeast actin mutations.</title>
        <authorList>
            <person name="Novick P."/>
            <person name="Osmond B.C."/>
            <person name="Botstein D."/>
        </authorList>
    </citation>
    <scope>FUNCTION</scope>
</reference>
<reference key="5">
    <citation type="journal article" date="2000" name="Mol. Biol. Cell">
        <title>Vps52p, Vps53p, and Vps54p form a novel multisubunit complex required for protein sorting at the yeast late Golgi.</title>
        <authorList>
            <person name="Conibear E."/>
            <person name="Stevens T.H."/>
        </authorList>
    </citation>
    <scope>FUNCTION</scope>
    <scope>INTERACTION WITH VPS53 AND VPS54</scope>
</reference>
<reference key="6">
    <citation type="journal article" date="2001" name="EMBO J.">
        <title>An effector of Ypt6p binds the SNARE Tlg1p and mediates selective fusion of vesicles with late Golgi membranes.</title>
        <authorList>
            <person name="Siniossoglou S."/>
            <person name="Pelham H.R.B."/>
        </authorList>
    </citation>
    <scope>FUNCTION</scope>
    <scope>INTERACTION WITH TLG1 AND YPT6</scope>
</reference>
<reference key="7">
    <citation type="journal article" date="2002" name="J. Biol. Chem.">
        <title>Vps51p links the VFT complex to the SNARE Tlg1p.</title>
        <authorList>
            <person name="Siniossoglou S."/>
            <person name="Pelham H.R.B."/>
        </authorList>
    </citation>
    <scope>FUNCTION</scope>
    <scope>SUBCELLULAR LOCATION</scope>
    <scope>INTERACTION WITH VPS51; VSP53 AND VSP54</scope>
</reference>
<reference key="8">
    <citation type="journal article" date="2003" name="J. Biol. Chem.">
        <title>Vps51 is part of the yeast Vps fifty-three tethering complex essential for retrograde traffic from the early endosome and Cvt vesicle completion.</title>
        <authorList>
            <person name="Reggiori F."/>
            <person name="Wang C.-W."/>
            <person name="Stromhaug P.E."/>
            <person name="Shintani T."/>
            <person name="Klionsky D.J."/>
        </authorList>
    </citation>
    <scope>FUNCTION</scope>
    <scope>INTERACTION WITH VPS51; VPS53; VPS54 AND TGL1</scope>
</reference>
<reference key="9">
    <citation type="journal article" date="2003" name="Mol. Biol. Cell">
        <title>Vps51p mediates the association of the GARP (Vps52/53/54) complex with the late Golgi t-SNARE Tlg1p.</title>
        <authorList>
            <person name="Conibear E."/>
            <person name="Cleck J.N."/>
            <person name="Stevens T.H."/>
        </authorList>
    </citation>
    <scope>FUNCTION</scope>
    <scope>INTERACTION WITH VPS51; VPS53; VPS54 AND TGL1</scope>
</reference>
<reference key="10">
    <citation type="journal article" date="2003" name="Nature">
        <title>Global analysis of protein localization in budding yeast.</title>
        <authorList>
            <person name="Huh W.-K."/>
            <person name="Falvo J.V."/>
            <person name="Gerke L.C."/>
            <person name="Carroll A.S."/>
            <person name="Howson R.W."/>
            <person name="Weissman J.S."/>
            <person name="O'Shea E.K."/>
        </authorList>
    </citation>
    <scope>SUBCELLULAR LOCATION [LARGE SCALE ANALYSIS]</scope>
</reference>
<reference key="11">
    <citation type="journal article" date="2003" name="Nature">
        <title>Global analysis of protein expression in yeast.</title>
        <authorList>
            <person name="Ghaemmaghami S."/>
            <person name="Huh W.-K."/>
            <person name="Bower K."/>
            <person name="Howson R.W."/>
            <person name="Belle A."/>
            <person name="Dephoure N."/>
            <person name="O'Shea E.K."/>
            <person name="Weissman J.S."/>
        </authorList>
    </citation>
    <scope>LEVEL OF PROTEIN EXPRESSION [LARGE SCALE ANALYSIS]</scope>
</reference>
<reference key="12">
    <citation type="journal article" date="2008" name="Mol. Cell. Proteomics">
        <title>A multidimensional chromatography technology for in-depth phosphoproteome analysis.</title>
        <authorList>
            <person name="Albuquerque C.P."/>
            <person name="Smolka M.B."/>
            <person name="Payne S.H."/>
            <person name="Bafna V."/>
            <person name="Eng J."/>
            <person name="Zhou H."/>
        </authorList>
    </citation>
    <scope>PHOSPHORYLATION [LARGE SCALE ANALYSIS] AT SER-602</scope>
    <scope>IDENTIFICATION BY MASS SPECTROMETRY [LARGE SCALE ANALYSIS]</scope>
</reference>
<feature type="chain" id="PRO_0000213318" description="Vacuolar protein sorting-associated protein 52">
    <location>
        <begin position="1"/>
        <end position="641"/>
    </location>
</feature>
<feature type="coiled-coil region" evidence="1">
    <location>
        <begin position="81"/>
        <end position="110"/>
    </location>
</feature>
<feature type="modified residue" description="Phosphoserine" evidence="10">
    <location>
        <position position="602"/>
    </location>
</feature>
<feature type="sequence conflict" description="In Ref. 1; CAA82878." evidence="9" ref="1">
    <original>KRLIIS</original>
    <variation>EKTYYF</variation>
    <location>
        <begin position="204"/>
        <end position="209"/>
    </location>
</feature>
<gene>
    <name type="primary">VPS52</name>
    <name type="synonym">SAC2</name>
    <name type="ordered locus">YDR484W</name>
    <name type="ORF">D8035.27</name>
</gene>
<organism>
    <name type="scientific">Saccharomyces cerevisiae (strain ATCC 204508 / S288c)</name>
    <name type="common">Baker's yeast</name>
    <dbReference type="NCBI Taxonomy" id="559292"/>
    <lineage>
        <taxon>Eukaryota</taxon>
        <taxon>Fungi</taxon>
        <taxon>Dikarya</taxon>
        <taxon>Ascomycota</taxon>
        <taxon>Saccharomycotina</taxon>
        <taxon>Saccharomycetes</taxon>
        <taxon>Saccharomycetales</taxon>
        <taxon>Saccharomycetaceae</taxon>
        <taxon>Saccharomyces</taxon>
    </lineage>
</organism>
<sequence>MDVLKEVLSLDQDKFDQLKETSRDKTNETDDPFENYLKDCKFKAPSNKDQSPFAKLKSLQETHSNNEAAINIIIPQLIDYLTEFTNRLSNYTQDLDFIKKKSNELQSLLEYNSTKLAHISPMVNDLMIPPELIDDIIKGKINESWQDNITFIADKEEIYNKYRSNNLDQDNKDAENSAMLAPKDFDKLCQLLDILKNVILERSKRLIISKIKTLRSHNPVPSQRIQNKLLKVQKIFPFIRDNNLSLALELRQAYCYTMKWYYREYFSRYIRSLTILQFQQIDSQFALGNGLSTTSVSGFNNSPSLFFSNYLTTSASNAFYNKLPVTDEKIDKYFQIKKRLNILTQEDNTVMVSQIAENNTTKNYIEIGFKNLNLAILDNCTVEYHFLKDFFAMNGDNFEEINGLLEQIFQPTFDEATTYTQQLIQYNYDIFGVLISIRVANQLQFESERRGIPSMFDSFLNGQLIQLWPRFQQLVDFQCESLRKAAITTNVAKYAGNSSTSNSSPLTSPHELTVQFGKFLSSFLTLAITHKQSIDERSEPLYNSIIRLRNDFETVMTKCSKKTKSPERFLATNYMYLYNNLQQLHLHLNINDSDAQNYNFDSAENVGTKVANDDDNDSSVPLIIRETENHFKTLVEAFTRN</sequence>
<name>VPS52_YEAST</name>